<comment type="function">
    <text evidence="2">Alpha toxins bind voltage-independently at site-3 of sodium channels (Nav) and inhibit the inactivation of the activated channels, thereby blocking neuronal transmission.</text>
</comment>
<comment type="subcellular location">
    <subcellularLocation>
        <location evidence="2">Secreted</location>
    </subcellularLocation>
</comment>
<comment type="tissue specificity">
    <text evidence="4">Expressed by the venom gland.</text>
</comment>
<comment type="domain">
    <text evidence="4">Has the structural arrangement of an alpha-helix connected to antiparallel beta-sheets by disulfide bonds (CS-alpha/beta).</text>
</comment>
<comment type="similarity">
    <text evidence="4">Belongs to the long (4 C-C) scorpion toxin superfamily. Sodium channel inhibitor family. Alpha subfamily.</text>
</comment>
<protein>
    <recommendedName>
        <fullName>Alpha-toxin Ac2</fullName>
    </recommendedName>
    <alternativeName>
        <fullName>Neurotoxin 2</fullName>
    </alternativeName>
</protein>
<feature type="signal peptide" evidence="2">
    <location>
        <begin position="1"/>
        <end position="19"/>
    </location>
</feature>
<feature type="chain" id="PRO_5000585057" description="Alpha-toxin Ac2">
    <location>
        <begin position="20"/>
        <end position="83"/>
    </location>
</feature>
<feature type="domain" description="LCN-type CS-alpha/beta" evidence="3">
    <location>
        <begin position="21"/>
        <end position="83"/>
    </location>
</feature>
<feature type="modified residue" description="Lysine amide" evidence="1">
    <location>
        <position position="83"/>
    </location>
</feature>
<feature type="disulfide bond" evidence="3">
    <location>
        <begin position="31"/>
        <end position="82"/>
    </location>
</feature>
<feature type="disulfide bond" evidence="3">
    <location>
        <begin position="35"/>
        <end position="55"/>
    </location>
</feature>
<feature type="disulfide bond" evidence="3">
    <location>
        <begin position="41"/>
        <end position="65"/>
    </location>
</feature>
<feature type="disulfide bond" evidence="3">
    <location>
        <begin position="45"/>
        <end position="67"/>
    </location>
</feature>
<dbReference type="EMBL" id="GQ335451">
    <property type="protein sequence ID" value="ADE42760.1"/>
    <property type="molecule type" value="Genomic_DNA"/>
</dbReference>
<dbReference type="SMR" id="D5HR51"/>
<dbReference type="GO" id="GO:0005576">
    <property type="term" value="C:extracellular region"/>
    <property type="evidence" value="ECO:0007669"/>
    <property type="project" value="UniProtKB-SubCell"/>
</dbReference>
<dbReference type="GO" id="GO:0019871">
    <property type="term" value="F:sodium channel inhibitor activity"/>
    <property type="evidence" value="ECO:0007669"/>
    <property type="project" value="InterPro"/>
</dbReference>
<dbReference type="GO" id="GO:0090729">
    <property type="term" value="F:toxin activity"/>
    <property type="evidence" value="ECO:0007669"/>
    <property type="project" value="UniProtKB-KW"/>
</dbReference>
<dbReference type="GO" id="GO:0006952">
    <property type="term" value="P:defense response"/>
    <property type="evidence" value="ECO:0007669"/>
    <property type="project" value="InterPro"/>
</dbReference>
<dbReference type="CDD" id="cd23106">
    <property type="entry name" value="neurotoxins_LC_scorpion"/>
    <property type="match status" value="1"/>
</dbReference>
<dbReference type="Gene3D" id="3.30.30.10">
    <property type="entry name" value="Knottin, scorpion toxin-like"/>
    <property type="match status" value="1"/>
</dbReference>
<dbReference type="InterPro" id="IPR044062">
    <property type="entry name" value="LCN-type_CS_alpha_beta_dom"/>
</dbReference>
<dbReference type="InterPro" id="IPR003614">
    <property type="entry name" value="Scorpion_toxin-like"/>
</dbReference>
<dbReference type="InterPro" id="IPR036574">
    <property type="entry name" value="Scorpion_toxin-like_sf"/>
</dbReference>
<dbReference type="InterPro" id="IPR018218">
    <property type="entry name" value="Scorpion_toxinL"/>
</dbReference>
<dbReference type="InterPro" id="IPR002061">
    <property type="entry name" value="Scorpion_toxinL/defensin"/>
</dbReference>
<dbReference type="Pfam" id="PF00537">
    <property type="entry name" value="Toxin_3"/>
    <property type="match status" value="1"/>
</dbReference>
<dbReference type="PRINTS" id="PR00285">
    <property type="entry name" value="SCORPNTOXIN"/>
</dbReference>
<dbReference type="SMART" id="SM00505">
    <property type="entry name" value="Knot1"/>
    <property type="match status" value="1"/>
</dbReference>
<dbReference type="SUPFAM" id="SSF57095">
    <property type="entry name" value="Scorpion toxin-like"/>
    <property type="match status" value="1"/>
</dbReference>
<dbReference type="PROSITE" id="PS51863">
    <property type="entry name" value="LCN_CSAB"/>
    <property type="match status" value="1"/>
</dbReference>
<proteinExistence type="inferred from homology"/>
<evidence type="ECO:0000250" key="1">
    <source>
        <dbReference type="UniProtKB" id="P01480"/>
    </source>
</evidence>
<evidence type="ECO:0000250" key="2">
    <source>
        <dbReference type="UniProtKB" id="P01484"/>
    </source>
</evidence>
<evidence type="ECO:0000255" key="3">
    <source>
        <dbReference type="PROSITE-ProRule" id="PRU01210"/>
    </source>
</evidence>
<evidence type="ECO:0000305" key="4"/>
<keyword id="KW-0027">Amidation</keyword>
<keyword id="KW-1015">Disulfide bond</keyword>
<keyword id="KW-0872">Ion channel impairing toxin</keyword>
<keyword id="KW-0528">Neurotoxin</keyword>
<keyword id="KW-0964">Secreted</keyword>
<keyword id="KW-0732">Signal</keyword>
<keyword id="KW-0800">Toxin</keyword>
<keyword id="KW-0738">Voltage-gated sodium channel impairing toxin</keyword>
<organism>
    <name type="scientific">Androctonus crassicauda</name>
    <name type="common">Arabian fat-tailed scorpion</name>
    <dbReference type="NCBI Taxonomy" id="122909"/>
    <lineage>
        <taxon>Eukaryota</taxon>
        <taxon>Metazoa</taxon>
        <taxon>Ecdysozoa</taxon>
        <taxon>Arthropoda</taxon>
        <taxon>Chelicerata</taxon>
        <taxon>Arachnida</taxon>
        <taxon>Scorpiones</taxon>
        <taxon>Buthida</taxon>
        <taxon>Buthoidea</taxon>
        <taxon>Buthidae</taxon>
        <taxon>Androctonus</taxon>
    </lineage>
</organism>
<name>SCX2A_ANDCR</name>
<reference key="1">
    <citation type="journal article" date="2010" name="Mol. Biol. Evol.">
        <title>Positions under positive selection--key for selectivity and potency of scorpion alpha-toxins.</title>
        <authorList>
            <person name="Weinberger H."/>
            <person name="Moran Y."/>
            <person name="Gordon D."/>
            <person name="Turkov M."/>
            <person name="Kahn R."/>
            <person name="Gurevitz M."/>
        </authorList>
    </citation>
    <scope>NUCLEOTIDE SEQUENCE [GENOMIC DNA]</scope>
</reference>
<accession>D5HR51</accession>
<sequence>MNYLVMISLALLFMTGVESIKDGYIVDDRNCTYFCGTKSYCNGECTKLKGESGYCQWASPYGNACYCYKLPDHVRTKGPGRCKGR</sequence>